<protein>
    <recommendedName>
        <fullName evidence="1">Adenine phosphoribosyltransferase</fullName>
        <shortName evidence="1">APRT</shortName>
        <ecNumber evidence="1">2.4.2.7</ecNumber>
    </recommendedName>
</protein>
<feature type="chain" id="PRO_0000321410" description="Adenine phosphoribosyltransferase">
    <location>
        <begin position="1"/>
        <end position="184"/>
    </location>
</feature>
<gene>
    <name evidence="1" type="primary">apt</name>
    <name type="ordered locus">Sputw3181_1705</name>
</gene>
<comment type="function">
    <text evidence="1">Catalyzes a salvage reaction resulting in the formation of AMP, that is energically less costly than de novo synthesis.</text>
</comment>
<comment type="catalytic activity">
    <reaction evidence="1">
        <text>AMP + diphosphate = 5-phospho-alpha-D-ribose 1-diphosphate + adenine</text>
        <dbReference type="Rhea" id="RHEA:16609"/>
        <dbReference type="ChEBI" id="CHEBI:16708"/>
        <dbReference type="ChEBI" id="CHEBI:33019"/>
        <dbReference type="ChEBI" id="CHEBI:58017"/>
        <dbReference type="ChEBI" id="CHEBI:456215"/>
        <dbReference type="EC" id="2.4.2.7"/>
    </reaction>
</comment>
<comment type="pathway">
    <text evidence="1">Purine metabolism; AMP biosynthesis via salvage pathway; AMP from adenine: step 1/1.</text>
</comment>
<comment type="subunit">
    <text evidence="1">Homodimer.</text>
</comment>
<comment type="subcellular location">
    <subcellularLocation>
        <location evidence="1">Cytoplasm</location>
    </subcellularLocation>
</comment>
<comment type="similarity">
    <text evidence="1">Belongs to the purine/pyrimidine phosphoribosyltransferase family.</text>
</comment>
<accession>A1RIP7</accession>
<keyword id="KW-0963">Cytoplasm</keyword>
<keyword id="KW-0328">Glycosyltransferase</keyword>
<keyword id="KW-0660">Purine salvage</keyword>
<keyword id="KW-0808">Transferase</keyword>
<organism>
    <name type="scientific">Shewanella sp. (strain W3-18-1)</name>
    <dbReference type="NCBI Taxonomy" id="351745"/>
    <lineage>
        <taxon>Bacteria</taxon>
        <taxon>Pseudomonadati</taxon>
        <taxon>Pseudomonadota</taxon>
        <taxon>Gammaproteobacteria</taxon>
        <taxon>Alteromonadales</taxon>
        <taxon>Shewanellaceae</taxon>
        <taxon>Shewanella</taxon>
    </lineage>
</organism>
<evidence type="ECO:0000255" key="1">
    <source>
        <dbReference type="HAMAP-Rule" id="MF_00004"/>
    </source>
</evidence>
<reference key="1">
    <citation type="submission" date="2006-12" db="EMBL/GenBank/DDBJ databases">
        <title>Complete sequence of Shewanella sp. W3-18-1.</title>
        <authorList>
            <consortium name="US DOE Joint Genome Institute"/>
            <person name="Copeland A."/>
            <person name="Lucas S."/>
            <person name="Lapidus A."/>
            <person name="Barry K."/>
            <person name="Detter J.C."/>
            <person name="Glavina del Rio T."/>
            <person name="Hammon N."/>
            <person name="Israni S."/>
            <person name="Dalin E."/>
            <person name="Tice H."/>
            <person name="Pitluck S."/>
            <person name="Chain P."/>
            <person name="Malfatti S."/>
            <person name="Shin M."/>
            <person name="Vergez L."/>
            <person name="Schmutz J."/>
            <person name="Larimer F."/>
            <person name="Land M."/>
            <person name="Hauser L."/>
            <person name="Kyrpides N."/>
            <person name="Lykidis A."/>
            <person name="Tiedje J."/>
            <person name="Richardson P."/>
        </authorList>
    </citation>
    <scope>NUCLEOTIDE SEQUENCE [LARGE SCALE GENOMIC DNA]</scope>
    <source>
        <strain>W3-18-1</strain>
    </source>
</reference>
<proteinExistence type="inferred from homology"/>
<name>APT_SHESW</name>
<sequence>MMAMNTETLSLIKQSIKTIPNYPKEGILFRDVTSLLENAAAYKAAIDLLVEHYRGQGFTKIVGTEARGFLFGAPLALELGIGFVPVRKPGKLPRATISQSYELEYGHDSLEIHTDAISANDKVLVVDDLLATGGTIEATVKLIRQLGGEVKDAAFVISLPDLGGEARLTALGLELVKLCEFEGE</sequence>
<dbReference type="EC" id="2.4.2.7" evidence="1"/>
<dbReference type="EMBL" id="CP000503">
    <property type="protein sequence ID" value="ABM24542.1"/>
    <property type="molecule type" value="Genomic_DNA"/>
</dbReference>
<dbReference type="SMR" id="A1RIP7"/>
<dbReference type="KEGG" id="shw:Sputw3181_1705"/>
<dbReference type="HOGENOM" id="CLU_063339_3_0_6"/>
<dbReference type="UniPathway" id="UPA00588">
    <property type="reaction ID" value="UER00646"/>
</dbReference>
<dbReference type="Proteomes" id="UP000002597">
    <property type="component" value="Chromosome"/>
</dbReference>
<dbReference type="GO" id="GO:0005737">
    <property type="term" value="C:cytoplasm"/>
    <property type="evidence" value="ECO:0007669"/>
    <property type="project" value="UniProtKB-SubCell"/>
</dbReference>
<dbReference type="GO" id="GO:0002055">
    <property type="term" value="F:adenine binding"/>
    <property type="evidence" value="ECO:0007669"/>
    <property type="project" value="TreeGrafter"/>
</dbReference>
<dbReference type="GO" id="GO:0003999">
    <property type="term" value="F:adenine phosphoribosyltransferase activity"/>
    <property type="evidence" value="ECO:0007669"/>
    <property type="project" value="UniProtKB-UniRule"/>
</dbReference>
<dbReference type="GO" id="GO:0016208">
    <property type="term" value="F:AMP binding"/>
    <property type="evidence" value="ECO:0007669"/>
    <property type="project" value="TreeGrafter"/>
</dbReference>
<dbReference type="GO" id="GO:0006168">
    <property type="term" value="P:adenine salvage"/>
    <property type="evidence" value="ECO:0007669"/>
    <property type="project" value="InterPro"/>
</dbReference>
<dbReference type="GO" id="GO:0044209">
    <property type="term" value="P:AMP salvage"/>
    <property type="evidence" value="ECO:0007669"/>
    <property type="project" value="UniProtKB-UniRule"/>
</dbReference>
<dbReference type="GO" id="GO:0006166">
    <property type="term" value="P:purine ribonucleoside salvage"/>
    <property type="evidence" value="ECO:0007669"/>
    <property type="project" value="UniProtKB-KW"/>
</dbReference>
<dbReference type="CDD" id="cd06223">
    <property type="entry name" value="PRTases_typeI"/>
    <property type="match status" value="1"/>
</dbReference>
<dbReference type="FunFam" id="3.40.50.2020:FF:000004">
    <property type="entry name" value="Adenine phosphoribosyltransferase"/>
    <property type="match status" value="1"/>
</dbReference>
<dbReference type="Gene3D" id="3.40.50.2020">
    <property type="match status" value="1"/>
</dbReference>
<dbReference type="HAMAP" id="MF_00004">
    <property type="entry name" value="Aden_phosphoribosyltr"/>
    <property type="match status" value="1"/>
</dbReference>
<dbReference type="InterPro" id="IPR005764">
    <property type="entry name" value="Ade_phspho_trans"/>
</dbReference>
<dbReference type="InterPro" id="IPR000836">
    <property type="entry name" value="PRibTrfase_dom"/>
</dbReference>
<dbReference type="InterPro" id="IPR029057">
    <property type="entry name" value="PRTase-like"/>
</dbReference>
<dbReference type="InterPro" id="IPR050054">
    <property type="entry name" value="UPRTase/APRTase"/>
</dbReference>
<dbReference type="NCBIfam" id="TIGR01090">
    <property type="entry name" value="apt"/>
    <property type="match status" value="1"/>
</dbReference>
<dbReference type="NCBIfam" id="NF002632">
    <property type="entry name" value="PRK02304.1-1"/>
    <property type="match status" value="1"/>
</dbReference>
<dbReference type="NCBIfam" id="NF002634">
    <property type="entry name" value="PRK02304.1-3"/>
    <property type="match status" value="1"/>
</dbReference>
<dbReference type="NCBIfam" id="NF002636">
    <property type="entry name" value="PRK02304.1-5"/>
    <property type="match status" value="1"/>
</dbReference>
<dbReference type="PANTHER" id="PTHR32315">
    <property type="entry name" value="ADENINE PHOSPHORIBOSYLTRANSFERASE"/>
    <property type="match status" value="1"/>
</dbReference>
<dbReference type="PANTHER" id="PTHR32315:SF3">
    <property type="entry name" value="ADENINE PHOSPHORIBOSYLTRANSFERASE"/>
    <property type="match status" value="1"/>
</dbReference>
<dbReference type="Pfam" id="PF00156">
    <property type="entry name" value="Pribosyltran"/>
    <property type="match status" value="1"/>
</dbReference>
<dbReference type="SUPFAM" id="SSF53271">
    <property type="entry name" value="PRTase-like"/>
    <property type="match status" value="1"/>
</dbReference>
<dbReference type="PROSITE" id="PS00103">
    <property type="entry name" value="PUR_PYR_PR_TRANSFER"/>
    <property type="match status" value="1"/>
</dbReference>